<comment type="function">
    <text evidence="2">F(1)F(0) ATP synthase produces ATP from ADP in the presence of a proton or sodium gradient. F-type ATPases consist of two structural domains, F(1) containing the extramembraneous catalytic core and F(0) containing the membrane proton channel, linked together by a central stalk and a peripheral stalk. During catalysis, ATP synthesis in the catalytic domain of F(1) is coupled via a rotary mechanism of the central stalk subunits to proton translocation.</text>
</comment>
<comment type="function">
    <text evidence="2">Component of the F(0) channel, it forms part of the peripheral stalk, linking F(1) to F(0).</text>
</comment>
<comment type="subunit">
    <text evidence="1">F-type ATPases have 2 components, F(1) - the catalytic core - and F(0) - the membrane proton channel. F(1) has five subunits: alpha(3), beta(3), gamma(1), delta(1), epsilon(1). F(0) has four main subunits: a(1), b(2) and c(10-14). The alpha and beta chains form an alternating ring which encloses part of the gamma chain. F(1) is attached to F(0) by a central stalk formed by the gamma and epsilon chains, while a peripheral stalk is formed by the delta and b chains (By similarity).</text>
</comment>
<comment type="subcellular location">
    <subcellularLocation>
        <location evidence="2">Cell inner membrane</location>
        <topology evidence="2">Single-pass membrane protein</topology>
    </subcellularLocation>
</comment>
<comment type="similarity">
    <text evidence="2">Belongs to the ATPase B chain family.</text>
</comment>
<dbReference type="EMBL" id="CP001101">
    <property type="protein sequence ID" value="ACE05394.1"/>
    <property type="molecule type" value="Genomic_DNA"/>
</dbReference>
<dbReference type="SMR" id="B3EQ96"/>
<dbReference type="STRING" id="331678.Cphamn1_2500"/>
<dbReference type="KEGG" id="cpb:Cphamn1_2500"/>
<dbReference type="eggNOG" id="COG0711">
    <property type="taxonomic scope" value="Bacteria"/>
</dbReference>
<dbReference type="HOGENOM" id="CLU_079215_4_1_10"/>
<dbReference type="OrthoDB" id="9795289at2"/>
<dbReference type="GO" id="GO:0005886">
    <property type="term" value="C:plasma membrane"/>
    <property type="evidence" value="ECO:0007669"/>
    <property type="project" value="UniProtKB-SubCell"/>
</dbReference>
<dbReference type="GO" id="GO:0045259">
    <property type="term" value="C:proton-transporting ATP synthase complex"/>
    <property type="evidence" value="ECO:0007669"/>
    <property type="project" value="UniProtKB-KW"/>
</dbReference>
<dbReference type="GO" id="GO:0046933">
    <property type="term" value="F:proton-transporting ATP synthase activity, rotational mechanism"/>
    <property type="evidence" value="ECO:0007669"/>
    <property type="project" value="UniProtKB-UniRule"/>
</dbReference>
<dbReference type="GO" id="GO:0046961">
    <property type="term" value="F:proton-transporting ATPase activity, rotational mechanism"/>
    <property type="evidence" value="ECO:0007669"/>
    <property type="project" value="TreeGrafter"/>
</dbReference>
<dbReference type="CDD" id="cd06503">
    <property type="entry name" value="ATP-synt_Fo_b"/>
    <property type="match status" value="1"/>
</dbReference>
<dbReference type="Gene3D" id="1.20.5.620">
    <property type="entry name" value="F1F0 ATP synthase subunit B, membrane domain"/>
    <property type="match status" value="1"/>
</dbReference>
<dbReference type="HAMAP" id="MF_01398">
    <property type="entry name" value="ATP_synth_b_bprime"/>
    <property type="match status" value="1"/>
</dbReference>
<dbReference type="InterPro" id="IPR028987">
    <property type="entry name" value="ATP_synth_B-like_membr_sf"/>
</dbReference>
<dbReference type="InterPro" id="IPR002146">
    <property type="entry name" value="ATP_synth_b/b'su_bac/chlpt"/>
</dbReference>
<dbReference type="InterPro" id="IPR005864">
    <property type="entry name" value="ATP_synth_F0_bsu_bac"/>
</dbReference>
<dbReference type="InterPro" id="IPR050059">
    <property type="entry name" value="ATP_synthase_B_chain"/>
</dbReference>
<dbReference type="NCBIfam" id="TIGR01144">
    <property type="entry name" value="ATP_synt_b"/>
    <property type="match status" value="1"/>
</dbReference>
<dbReference type="NCBIfam" id="NF011042">
    <property type="entry name" value="PRK14472.1"/>
    <property type="match status" value="1"/>
</dbReference>
<dbReference type="PANTHER" id="PTHR33445:SF1">
    <property type="entry name" value="ATP SYNTHASE SUBUNIT B"/>
    <property type="match status" value="1"/>
</dbReference>
<dbReference type="PANTHER" id="PTHR33445">
    <property type="entry name" value="ATP SYNTHASE SUBUNIT B', CHLOROPLASTIC"/>
    <property type="match status" value="1"/>
</dbReference>
<dbReference type="Pfam" id="PF00430">
    <property type="entry name" value="ATP-synt_B"/>
    <property type="match status" value="1"/>
</dbReference>
<dbReference type="SUPFAM" id="SSF81573">
    <property type="entry name" value="F1F0 ATP synthase subunit B, membrane domain"/>
    <property type="match status" value="1"/>
</dbReference>
<protein>
    <recommendedName>
        <fullName evidence="2">ATP synthase subunit b</fullName>
    </recommendedName>
    <alternativeName>
        <fullName evidence="2">ATP synthase F(0) sector subunit b</fullName>
    </alternativeName>
    <alternativeName>
        <fullName evidence="2">ATPase subunit I</fullName>
    </alternativeName>
    <alternativeName>
        <fullName evidence="2">F-type ATPase subunit b</fullName>
        <shortName evidence="2">F-ATPase subunit b</shortName>
    </alternativeName>
</protein>
<sequence length="175" mass="19487">MLTSGIIVLSGGLLDPNPGLIFWTTVTFLIVLFILKKFTWGPMLSALEEREKGIKNSIDRAQSAKEEAEAVLNKNRQLLAQAGADADKIIREGKEYGDKLKAEITEKAHLEASRMISSAKDEIDQEKRRALTELRTEVADLAVKGAEKIIMANLDAEKQKNIVDSMIQELSQHRN</sequence>
<name>ATPF_CHLPB</name>
<organism>
    <name type="scientific">Chlorobium phaeobacteroides (strain BS1)</name>
    <dbReference type="NCBI Taxonomy" id="331678"/>
    <lineage>
        <taxon>Bacteria</taxon>
        <taxon>Pseudomonadati</taxon>
        <taxon>Chlorobiota</taxon>
        <taxon>Chlorobiia</taxon>
        <taxon>Chlorobiales</taxon>
        <taxon>Chlorobiaceae</taxon>
        <taxon>Chlorobium/Pelodictyon group</taxon>
        <taxon>Chlorobium</taxon>
    </lineage>
</organism>
<reference key="1">
    <citation type="submission" date="2008-06" db="EMBL/GenBank/DDBJ databases">
        <title>Complete sequence of Chlorobium phaeobacteroides BS1.</title>
        <authorList>
            <consortium name="US DOE Joint Genome Institute"/>
            <person name="Lucas S."/>
            <person name="Copeland A."/>
            <person name="Lapidus A."/>
            <person name="Glavina del Rio T."/>
            <person name="Dalin E."/>
            <person name="Tice H."/>
            <person name="Bruce D."/>
            <person name="Goodwin L."/>
            <person name="Pitluck S."/>
            <person name="Schmutz J."/>
            <person name="Larimer F."/>
            <person name="Land M."/>
            <person name="Hauser L."/>
            <person name="Kyrpides N."/>
            <person name="Ovchinnikova G."/>
            <person name="Li T."/>
            <person name="Liu Z."/>
            <person name="Zhao F."/>
            <person name="Overmann J."/>
            <person name="Bryant D.A."/>
            <person name="Richardson P."/>
        </authorList>
    </citation>
    <scope>NUCLEOTIDE SEQUENCE [LARGE SCALE GENOMIC DNA]</scope>
    <source>
        <strain>BS1</strain>
    </source>
</reference>
<proteinExistence type="inferred from homology"/>
<keyword id="KW-0066">ATP synthesis</keyword>
<keyword id="KW-0997">Cell inner membrane</keyword>
<keyword id="KW-1003">Cell membrane</keyword>
<keyword id="KW-0138">CF(0)</keyword>
<keyword id="KW-0375">Hydrogen ion transport</keyword>
<keyword id="KW-0406">Ion transport</keyword>
<keyword id="KW-0472">Membrane</keyword>
<keyword id="KW-0812">Transmembrane</keyword>
<keyword id="KW-1133">Transmembrane helix</keyword>
<keyword id="KW-0813">Transport</keyword>
<gene>
    <name evidence="2" type="primary">atpF</name>
    <name type="ordered locus">Cphamn1_2500</name>
</gene>
<accession>B3EQ96</accession>
<feature type="chain" id="PRO_0000368410" description="ATP synthase subunit b">
    <location>
        <begin position="1"/>
        <end position="175"/>
    </location>
</feature>
<feature type="transmembrane region" description="Helical" evidence="2">
    <location>
        <begin position="19"/>
        <end position="35"/>
    </location>
</feature>
<evidence type="ECO:0000250" key="1"/>
<evidence type="ECO:0000255" key="2">
    <source>
        <dbReference type="HAMAP-Rule" id="MF_01398"/>
    </source>
</evidence>